<feature type="chain" id="PRO_0000364255" description="Eukaryotic translation initiation factor 3 subunit L">
    <location>
        <begin position="1"/>
        <end position="476"/>
    </location>
</feature>
<feature type="domain" description="PCI" evidence="2">
    <location>
        <begin position="257"/>
        <end position="452"/>
    </location>
</feature>
<organism>
    <name type="scientific">Aspergillus clavatus (strain ATCC 1007 / CBS 513.65 / DSM 816 / NCTC 3887 / NRRL 1 / QM 1276 / 107)</name>
    <dbReference type="NCBI Taxonomy" id="344612"/>
    <lineage>
        <taxon>Eukaryota</taxon>
        <taxon>Fungi</taxon>
        <taxon>Dikarya</taxon>
        <taxon>Ascomycota</taxon>
        <taxon>Pezizomycotina</taxon>
        <taxon>Eurotiomycetes</taxon>
        <taxon>Eurotiomycetidae</taxon>
        <taxon>Eurotiales</taxon>
        <taxon>Aspergillaceae</taxon>
        <taxon>Aspergillus</taxon>
        <taxon>Aspergillus subgen. Fumigati</taxon>
    </lineage>
</organism>
<evidence type="ECO:0000255" key="1">
    <source>
        <dbReference type="HAMAP-Rule" id="MF_03011"/>
    </source>
</evidence>
<evidence type="ECO:0000255" key="2">
    <source>
        <dbReference type="PROSITE-ProRule" id="PRU01185"/>
    </source>
</evidence>
<name>EIF3L_ASPCL</name>
<reference key="1">
    <citation type="journal article" date="2008" name="PLoS Genet.">
        <title>Genomic islands in the pathogenic filamentous fungus Aspergillus fumigatus.</title>
        <authorList>
            <person name="Fedorova N.D."/>
            <person name="Khaldi N."/>
            <person name="Joardar V.S."/>
            <person name="Maiti R."/>
            <person name="Amedeo P."/>
            <person name="Anderson M.J."/>
            <person name="Crabtree J."/>
            <person name="Silva J.C."/>
            <person name="Badger J.H."/>
            <person name="Albarraq A."/>
            <person name="Angiuoli S."/>
            <person name="Bussey H."/>
            <person name="Bowyer P."/>
            <person name="Cotty P.J."/>
            <person name="Dyer P.S."/>
            <person name="Egan A."/>
            <person name="Galens K."/>
            <person name="Fraser-Liggett C.M."/>
            <person name="Haas B.J."/>
            <person name="Inman J.M."/>
            <person name="Kent R."/>
            <person name="Lemieux S."/>
            <person name="Malavazi I."/>
            <person name="Orvis J."/>
            <person name="Roemer T."/>
            <person name="Ronning C.M."/>
            <person name="Sundaram J.P."/>
            <person name="Sutton G."/>
            <person name="Turner G."/>
            <person name="Venter J.C."/>
            <person name="White O.R."/>
            <person name="Whitty B.R."/>
            <person name="Youngman P."/>
            <person name="Wolfe K.H."/>
            <person name="Goldman G.H."/>
            <person name="Wortman J.R."/>
            <person name="Jiang B."/>
            <person name="Denning D.W."/>
            <person name="Nierman W.C."/>
        </authorList>
    </citation>
    <scope>NUCLEOTIDE SEQUENCE [LARGE SCALE GENOMIC DNA]</scope>
    <source>
        <strain>ATCC 1007 / CBS 513.65 / DSM 816 / NCTC 3887 / NRRL 1 / QM 1276 / 107</strain>
    </source>
</reference>
<accession>A1C690</accession>
<dbReference type="EMBL" id="DS027045">
    <property type="protein sequence ID" value="EAW13911.1"/>
    <property type="molecule type" value="Genomic_DNA"/>
</dbReference>
<dbReference type="RefSeq" id="XP_001275337.1">
    <property type="nucleotide sequence ID" value="XM_001275336.1"/>
</dbReference>
<dbReference type="SMR" id="A1C690"/>
<dbReference type="STRING" id="344612.A1C690"/>
<dbReference type="EnsemblFungi" id="EAW13911">
    <property type="protein sequence ID" value="EAW13911"/>
    <property type="gene ID" value="ACLA_069410"/>
</dbReference>
<dbReference type="GeneID" id="4707640"/>
<dbReference type="KEGG" id="act:ACLA_069410"/>
<dbReference type="VEuPathDB" id="FungiDB:ACLA_069410"/>
<dbReference type="eggNOG" id="KOG3677">
    <property type="taxonomic scope" value="Eukaryota"/>
</dbReference>
<dbReference type="HOGENOM" id="CLU_029210_2_0_1"/>
<dbReference type="OMA" id="AGWFIRN"/>
<dbReference type="OrthoDB" id="15082at2759"/>
<dbReference type="Proteomes" id="UP000006701">
    <property type="component" value="Unassembled WGS sequence"/>
</dbReference>
<dbReference type="GO" id="GO:0016282">
    <property type="term" value="C:eukaryotic 43S preinitiation complex"/>
    <property type="evidence" value="ECO:0007669"/>
    <property type="project" value="UniProtKB-UniRule"/>
</dbReference>
<dbReference type="GO" id="GO:0033290">
    <property type="term" value="C:eukaryotic 48S preinitiation complex"/>
    <property type="evidence" value="ECO:0007669"/>
    <property type="project" value="UniProtKB-UniRule"/>
</dbReference>
<dbReference type="GO" id="GO:0005852">
    <property type="term" value="C:eukaryotic translation initiation factor 3 complex"/>
    <property type="evidence" value="ECO:0007669"/>
    <property type="project" value="UniProtKB-UniRule"/>
</dbReference>
<dbReference type="GO" id="GO:0003743">
    <property type="term" value="F:translation initiation factor activity"/>
    <property type="evidence" value="ECO:0007669"/>
    <property type="project" value="UniProtKB-UniRule"/>
</dbReference>
<dbReference type="GO" id="GO:0001732">
    <property type="term" value="P:formation of cytoplasmic translation initiation complex"/>
    <property type="evidence" value="ECO:0007669"/>
    <property type="project" value="UniProtKB-UniRule"/>
</dbReference>
<dbReference type="HAMAP" id="MF_03011">
    <property type="entry name" value="eIF3l"/>
    <property type="match status" value="1"/>
</dbReference>
<dbReference type="InterPro" id="IPR019382">
    <property type="entry name" value="eIF3l"/>
</dbReference>
<dbReference type="InterPro" id="IPR000717">
    <property type="entry name" value="PCI_dom"/>
</dbReference>
<dbReference type="PANTHER" id="PTHR13242">
    <property type="entry name" value="EUKARYOTIC TRANSLATION INITIATION FACTOR 3"/>
    <property type="match status" value="1"/>
</dbReference>
<dbReference type="PANTHER" id="PTHR13242:SF0">
    <property type="entry name" value="EUKARYOTIC TRANSLATION INITIATION FACTOR 3 SUBUNIT L"/>
    <property type="match status" value="1"/>
</dbReference>
<dbReference type="Pfam" id="PF10255">
    <property type="entry name" value="Paf67"/>
    <property type="match status" value="1"/>
</dbReference>
<dbReference type="PROSITE" id="PS50250">
    <property type="entry name" value="PCI"/>
    <property type="match status" value="1"/>
</dbReference>
<keyword id="KW-0963">Cytoplasm</keyword>
<keyword id="KW-0396">Initiation factor</keyword>
<keyword id="KW-0648">Protein biosynthesis</keyword>
<keyword id="KW-1185">Reference proteome</keyword>
<proteinExistence type="inferred from homology"/>
<protein>
    <recommendedName>
        <fullName evidence="1">Eukaryotic translation initiation factor 3 subunit L</fullName>
        <shortName evidence="1">eIF3l</shortName>
    </recommendedName>
</protein>
<gene>
    <name type="ORF">ACLA_069410</name>
</gene>
<sequence length="476" mass="54753">MSYEERVNAHPNLGDESDVEEEALVNDYREQVNFDDGMSELERTTSLGAASQTQDLQAQLAAAATPLEYQATLETKFASYDNYCSLFHYILNSEGPVELEVPSYYWAWDVIDEFIYQFESFCRYRNRVARSGSNEEEAQLLRENPNTWGCYSVLNVLYSLIQRSQINEQLAAIKRGEDPLTVAGEYGSRPLYKMLGYFSIIGLLRVHCLLGDFSLALKTLDDIEMNKKAMFARVMAAHFTTYYYVGFSYMMMRRYGDAIRMFSHILVYVSRTKNFQKGGNSYDAIAKKNDQMYALIAICVALHPTRLDDTIHSALREKYGEQLIRLQHGGPEALPLFEELFRSACPKFISPTPPDFDNPAVNVDPVDHHTAIFMDEVKNTLYNPTIRSYLKLYTTMDLKKLAGFLEVEPEKLRSWLLVNKQRSRQVRWVEGGLLEGEPVNANDLDYALENDLIHVSETKAGRRLVDWYLRNLARVY</sequence>
<comment type="function">
    <text evidence="1">Component of the eukaryotic translation initiation factor 3 (eIF-3) complex, which is involved in protein synthesis of a specialized repertoire of mRNAs and, together with other initiation factors, stimulates binding of mRNA and methionyl-tRNAi to the 40S ribosome. The eIF-3 complex specifically targets and initiates translation of a subset of mRNAs involved in cell proliferation.</text>
</comment>
<comment type="subunit">
    <text evidence="1">Component of the eukaryotic translation initiation factor 3 (eIF-3) complex.</text>
</comment>
<comment type="subcellular location">
    <subcellularLocation>
        <location evidence="1">Cytoplasm</location>
    </subcellularLocation>
</comment>
<comment type="similarity">
    <text evidence="1">Belongs to the eIF-3 subunit L family.</text>
</comment>